<sequence>MVAAPTSPAELKLGVDCVIADINLADFGRKELDIAETEMPGLMALREKYGSEKPLKGARIAGSLHMTIQTAVLIETLVELGAEVRWASCNIFSTQDHAAAAIAAKGIPVFAVKGETLEEYWDYTHSILEWGDGGSPNMILDDGGDATGLVMLGSKAEQDITVLDNPGNEEETFLFASIKKKLAQDPTFYSRTKAQIQGVTEETTTGVARLYKMQKSGELPFPAINVNDSVTKSKFDNLYGCRESLVDSIKRATDVMVAGKQALVIGYGDVGKGSAQSLRGLGATVCIAEVDPICALQAAMEGYRVVRLEDVVEDMDIFVTATGNYQVIRNEHLVKMKDEAIVCNIGHFDNEIDVASLKEYEWENIKPQVDHITLPSGNRIILLAEGRLVNLGCATGHPSFVMSNSFTNQVLAQIELFTKGDEYAKEVYVLPKHLDEMVARLHLGRIGANLTELSKDQADYINVPVEGPYKPDHYRY</sequence>
<accession>Q3ANF4</accession>
<feature type="chain" id="PRO_1000024763" description="Adenosylhomocysteinase">
    <location>
        <begin position="1"/>
        <end position="476"/>
    </location>
</feature>
<feature type="binding site" evidence="1">
    <location>
        <position position="67"/>
    </location>
    <ligand>
        <name>substrate</name>
    </ligand>
</feature>
<feature type="binding site" evidence="1">
    <location>
        <position position="142"/>
    </location>
    <ligand>
        <name>substrate</name>
    </ligand>
</feature>
<feature type="binding site" evidence="1">
    <location>
        <position position="202"/>
    </location>
    <ligand>
        <name>substrate</name>
    </ligand>
</feature>
<feature type="binding site" evidence="1">
    <location>
        <begin position="203"/>
        <end position="205"/>
    </location>
    <ligand>
        <name>NAD(+)</name>
        <dbReference type="ChEBI" id="CHEBI:57540"/>
    </ligand>
</feature>
<feature type="binding site" evidence="1">
    <location>
        <position position="232"/>
    </location>
    <ligand>
        <name>substrate</name>
    </ligand>
</feature>
<feature type="binding site" evidence="1">
    <location>
        <position position="236"/>
    </location>
    <ligand>
        <name>substrate</name>
    </ligand>
</feature>
<feature type="binding site" evidence="1">
    <location>
        <position position="237"/>
    </location>
    <ligand>
        <name>NAD(+)</name>
        <dbReference type="ChEBI" id="CHEBI:57540"/>
    </ligand>
</feature>
<feature type="binding site" evidence="1">
    <location>
        <begin position="266"/>
        <end position="271"/>
    </location>
    <ligand>
        <name>NAD(+)</name>
        <dbReference type="ChEBI" id="CHEBI:57540"/>
    </ligand>
</feature>
<feature type="binding site" evidence="1">
    <location>
        <position position="289"/>
    </location>
    <ligand>
        <name>NAD(+)</name>
        <dbReference type="ChEBI" id="CHEBI:57540"/>
    </ligand>
</feature>
<feature type="binding site" evidence="1">
    <location>
        <position position="324"/>
    </location>
    <ligand>
        <name>NAD(+)</name>
        <dbReference type="ChEBI" id="CHEBI:57540"/>
    </ligand>
</feature>
<feature type="binding site" evidence="1">
    <location>
        <begin position="345"/>
        <end position="347"/>
    </location>
    <ligand>
        <name>NAD(+)</name>
        <dbReference type="ChEBI" id="CHEBI:57540"/>
    </ligand>
</feature>
<feature type="binding site" evidence="1">
    <location>
        <position position="390"/>
    </location>
    <ligand>
        <name>NAD(+)</name>
        <dbReference type="ChEBI" id="CHEBI:57540"/>
    </ligand>
</feature>
<comment type="function">
    <text evidence="1">May play a key role in the regulation of the intracellular concentration of adenosylhomocysteine.</text>
</comment>
<comment type="catalytic activity">
    <reaction evidence="1">
        <text>S-adenosyl-L-homocysteine + H2O = L-homocysteine + adenosine</text>
        <dbReference type="Rhea" id="RHEA:21708"/>
        <dbReference type="ChEBI" id="CHEBI:15377"/>
        <dbReference type="ChEBI" id="CHEBI:16335"/>
        <dbReference type="ChEBI" id="CHEBI:57856"/>
        <dbReference type="ChEBI" id="CHEBI:58199"/>
        <dbReference type="EC" id="3.13.2.1"/>
    </reaction>
</comment>
<comment type="cofactor">
    <cofactor evidence="1">
        <name>NAD(+)</name>
        <dbReference type="ChEBI" id="CHEBI:57540"/>
    </cofactor>
    <text evidence="1">Binds 1 NAD(+) per subunit.</text>
</comment>
<comment type="pathway">
    <text evidence="1">Amino-acid biosynthesis; L-homocysteine biosynthesis; L-homocysteine from S-adenosyl-L-homocysteine: step 1/1.</text>
</comment>
<comment type="subcellular location">
    <subcellularLocation>
        <location evidence="1">Cytoplasm</location>
    </subcellularLocation>
</comment>
<comment type="similarity">
    <text evidence="1">Belongs to the adenosylhomocysteinase family.</text>
</comment>
<reference key="1">
    <citation type="submission" date="2005-07" db="EMBL/GenBank/DDBJ databases">
        <title>Complete sequence of Synechococcus sp. CC9605.</title>
        <authorList>
            <consortium name="US DOE Joint Genome Institute"/>
            <person name="Copeland A."/>
            <person name="Lucas S."/>
            <person name="Lapidus A."/>
            <person name="Barry K."/>
            <person name="Detter J.C."/>
            <person name="Glavina T."/>
            <person name="Hammon N."/>
            <person name="Israni S."/>
            <person name="Pitluck S."/>
            <person name="Schmutz J."/>
            <person name="Martinez M."/>
            <person name="Larimer F."/>
            <person name="Land M."/>
            <person name="Kyrpides N."/>
            <person name="Ivanova N."/>
            <person name="Richardson P."/>
        </authorList>
    </citation>
    <scope>NUCLEOTIDE SEQUENCE [LARGE SCALE GENOMIC DNA]</scope>
    <source>
        <strain>CC9605</strain>
    </source>
</reference>
<evidence type="ECO:0000255" key="1">
    <source>
        <dbReference type="HAMAP-Rule" id="MF_00563"/>
    </source>
</evidence>
<dbReference type="EC" id="3.13.2.1" evidence="1"/>
<dbReference type="EMBL" id="CP000110">
    <property type="protein sequence ID" value="ABB33878.1"/>
    <property type="molecule type" value="Genomic_DNA"/>
</dbReference>
<dbReference type="RefSeq" id="WP_011363138.1">
    <property type="nucleotide sequence ID" value="NC_007516.1"/>
</dbReference>
<dbReference type="SMR" id="Q3ANF4"/>
<dbReference type="STRING" id="110662.Syncc9605_0102"/>
<dbReference type="KEGG" id="syd:Syncc9605_0102"/>
<dbReference type="eggNOG" id="COG0499">
    <property type="taxonomic scope" value="Bacteria"/>
</dbReference>
<dbReference type="HOGENOM" id="CLU_025194_2_1_3"/>
<dbReference type="OrthoDB" id="9802717at2"/>
<dbReference type="UniPathway" id="UPA00314">
    <property type="reaction ID" value="UER00076"/>
</dbReference>
<dbReference type="GO" id="GO:0005829">
    <property type="term" value="C:cytosol"/>
    <property type="evidence" value="ECO:0007669"/>
    <property type="project" value="TreeGrafter"/>
</dbReference>
<dbReference type="GO" id="GO:0004013">
    <property type="term" value="F:adenosylhomocysteinase activity"/>
    <property type="evidence" value="ECO:0007669"/>
    <property type="project" value="UniProtKB-UniRule"/>
</dbReference>
<dbReference type="GO" id="GO:0071269">
    <property type="term" value="P:L-homocysteine biosynthetic process"/>
    <property type="evidence" value="ECO:0007669"/>
    <property type="project" value="UniProtKB-UniRule"/>
</dbReference>
<dbReference type="GO" id="GO:0006730">
    <property type="term" value="P:one-carbon metabolic process"/>
    <property type="evidence" value="ECO:0007669"/>
    <property type="project" value="UniProtKB-KW"/>
</dbReference>
<dbReference type="GO" id="GO:0033353">
    <property type="term" value="P:S-adenosylmethionine cycle"/>
    <property type="evidence" value="ECO:0007669"/>
    <property type="project" value="TreeGrafter"/>
</dbReference>
<dbReference type="CDD" id="cd00401">
    <property type="entry name" value="SAHH"/>
    <property type="match status" value="1"/>
</dbReference>
<dbReference type="FunFam" id="3.40.50.720:FF:000004">
    <property type="entry name" value="Adenosylhomocysteinase"/>
    <property type="match status" value="1"/>
</dbReference>
<dbReference type="Gene3D" id="3.40.50.1480">
    <property type="entry name" value="Adenosylhomocysteinase-like"/>
    <property type="match status" value="1"/>
</dbReference>
<dbReference type="Gene3D" id="3.40.50.720">
    <property type="entry name" value="NAD(P)-binding Rossmann-like Domain"/>
    <property type="match status" value="1"/>
</dbReference>
<dbReference type="HAMAP" id="MF_00563">
    <property type="entry name" value="AdoHcyase"/>
    <property type="match status" value="1"/>
</dbReference>
<dbReference type="InterPro" id="IPR042172">
    <property type="entry name" value="Adenosylhomocyst_ase-like_sf"/>
</dbReference>
<dbReference type="InterPro" id="IPR000043">
    <property type="entry name" value="Adenosylhomocysteinase-like"/>
</dbReference>
<dbReference type="InterPro" id="IPR015878">
    <property type="entry name" value="Ado_hCys_hydrolase_NAD-bd"/>
</dbReference>
<dbReference type="InterPro" id="IPR036291">
    <property type="entry name" value="NAD(P)-bd_dom_sf"/>
</dbReference>
<dbReference type="InterPro" id="IPR020082">
    <property type="entry name" value="S-Ado-L-homoCys_hydrolase_CS"/>
</dbReference>
<dbReference type="NCBIfam" id="TIGR00936">
    <property type="entry name" value="ahcY"/>
    <property type="match status" value="1"/>
</dbReference>
<dbReference type="NCBIfam" id="NF004005">
    <property type="entry name" value="PRK05476.2-3"/>
    <property type="match status" value="1"/>
</dbReference>
<dbReference type="PANTHER" id="PTHR23420">
    <property type="entry name" value="ADENOSYLHOMOCYSTEINASE"/>
    <property type="match status" value="1"/>
</dbReference>
<dbReference type="PANTHER" id="PTHR23420:SF0">
    <property type="entry name" value="ADENOSYLHOMOCYSTEINASE"/>
    <property type="match status" value="1"/>
</dbReference>
<dbReference type="Pfam" id="PF05221">
    <property type="entry name" value="AdoHcyase"/>
    <property type="match status" value="1"/>
</dbReference>
<dbReference type="Pfam" id="PF00670">
    <property type="entry name" value="AdoHcyase_NAD"/>
    <property type="match status" value="1"/>
</dbReference>
<dbReference type="PIRSF" id="PIRSF001109">
    <property type="entry name" value="Ad_hcy_hydrolase"/>
    <property type="match status" value="1"/>
</dbReference>
<dbReference type="SMART" id="SM00996">
    <property type="entry name" value="AdoHcyase"/>
    <property type="match status" value="1"/>
</dbReference>
<dbReference type="SMART" id="SM00997">
    <property type="entry name" value="AdoHcyase_NAD"/>
    <property type="match status" value="1"/>
</dbReference>
<dbReference type="SUPFAM" id="SSF52283">
    <property type="entry name" value="Formate/glycerate dehydrogenase catalytic domain-like"/>
    <property type="match status" value="1"/>
</dbReference>
<dbReference type="SUPFAM" id="SSF51735">
    <property type="entry name" value="NAD(P)-binding Rossmann-fold domains"/>
    <property type="match status" value="1"/>
</dbReference>
<dbReference type="PROSITE" id="PS00738">
    <property type="entry name" value="ADOHCYASE_1"/>
    <property type="match status" value="1"/>
</dbReference>
<dbReference type="PROSITE" id="PS00739">
    <property type="entry name" value="ADOHCYASE_2"/>
    <property type="match status" value="1"/>
</dbReference>
<name>SAHH_SYNSC</name>
<keyword id="KW-0963">Cytoplasm</keyword>
<keyword id="KW-0378">Hydrolase</keyword>
<keyword id="KW-0520">NAD</keyword>
<keyword id="KW-0554">One-carbon metabolism</keyword>
<gene>
    <name evidence="1" type="primary">ahcY</name>
    <name type="ordered locus">Syncc9605_0102</name>
</gene>
<protein>
    <recommendedName>
        <fullName evidence="1">Adenosylhomocysteinase</fullName>
        <ecNumber evidence="1">3.13.2.1</ecNumber>
    </recommendedName>
    <alternativeName>
        <fullName evidence="1">S-adenosyl-L-homocysteine hydrolase</fullName>
        <shortName evidence="1">AdoHcyase</shortName>
    </alternativeName>
</protein>
<proteinExistence type="inferred from homology"/>
<organism>
    <name type="scientific">Synechococcus sp. (strain CC9605)</name>
    <dbReference type="NCBI Taxonomy" id="110662"/>
    <lineage>
        <taxon>Bacteria</taxon>
        <taxon>Bacillati</taxon>
        <taxon>Cyanobacteriota</taxon>
        <taxon>Cyanophyceae</taxon>
        <taxon>Synechococcales</taxon>
        <taxon>Synechococcaceae</taxon>
        <taxon>Synechococcus</taxon>
    </lineage>
</organism>